<name>YDHJ_BACSU</name>
<feature type="chain" id="PRO_0000360206" description="Uncharacterized protein YdhJ">
    <location>
        <begin position="1"/>
        <end position="325"/>
    </location>
</feature>
<feature type="domain" description="HD" evidence="1">
    <location>
        <begin position="49"/>
        <end position="151"/>
    </location>
</feature>
<proteinExistence type="predicted"/>
<sequence>MEISDIIYGQHHIDGVLEELIKSAPVQRLKGIYQGGASFLVNRKWNVTRYEHSIGVMLLIKKLGGTIEEQIAGLLHDVSHTAFSHVVDVVFENQAEDYHENIFQQVIVHSEIPDILQKHGYHTEELLSDDSRWTLLEQPAPELCADRTDYTLRDMYRYGHINLHEAQTFLDHLIVRNGRMFPDSIEAAEWFVSVYYKEVIDFFLNPVNVYGYEYLARALKAALRHDVISAEDLLKTDQEVLNILRASKNEEVLSLLTSIHPGIQVIEDDIQYDFHQKKKMRLIDPSIFLDDKWIKSSGVSEKVRKMGEAAYQKAKKGVYIKILKQ</sequence>
<organism>
    <name type="scientific">Bacillus subtilis (strain 168)</name>
    <dbReference type="NCBI Taxonomy" id="224308"/>
    <lineage>
        <taxon>Bacteria</taxon>
        <taxon>Bacillati</taxon>
        <taxon>Bacillota</taxon>
        <taxon>Bacilli</taxon>
        <taxon>Bacillales</taxon>
        <taxon>Bacillaceae</taxon>
        <taxon>Bacillus</taxon>
    </lineage>
</organism>
<dbReference type="EMBL" id="D88802">
    <property type="protein sequence ID" value="BAA19702.1"/>
    <property type="molecule type" value="Genomic_DNA"/>
</dbReference>
<dbReference type="EMBL" id="AL009126">
    <property type="protein sequence ID" value="CAB12397.1"/>
    <property type="molecule type" value="Genomic_DNA"/>
</dbReference>
<dbReference type="PIR" id="F69784">
    <property type="entry name" value="F69784"/>
</dbReference>
<dbReference type="RefSeq" id="NP_388459.1">
    <property type="nucleotide sequence ID" value="NC_000964.3"/>
</dbReference>
<dbReference type="RefSeq" id="WP_003234111.1">
    <property type="nucleotide sequence ID" value="NZ_OZ025638.1"/>
</dbReference>
<dbReference type="SMR" id="O05502"/>
<dbReference type="FunCoup" id="O05502">
    <property type="interactions" value="57"/>
</dbReference>
<dbReference type="STRING" id="224308.BSU05780"/>
<dbReference type="PaxDb" id="224308-BSU05780"/>
<dbReference type="EnsemblBacteria" id="CAB12397">
    <property type="protein sequence ID" value="CAB12397"/>
    <property type="gene ID" value="BSU_05780"/>
</dbReference>
<dbReference type="GeneID" id="938014"/>
<dbReference type="KEGG" id="bsu:BSU05780"/>
<dbReference type="PATRIC" id="fig|224308.179.peg.621"/>
<dbReference type="eggNOG" id="COG1078">
    <property type="taxonomic scope" value="Bacteria"/>
</dbReference>
<dbReference type="InParanoid" id="O05502"/>
<dbReference type="OrthoDB" id="9814017at2"/>
<dbReference type="PhylomeDB" id="O05502"/>
<dbReference type="BioCyc" id="BSUB:BSU05780-MONOMER"/>
<dbReference type="Proteomes" id="UP000001570">
    <property type="component" value="Chromosome"/>
</dbReference>
<dbReference type="GO" id="GO:0008832">
    <property type="term" value="F:dGTPase activity"/>
    <property type="evidence" value="ECO:0000318"/>
    <property type="project" value="GO_Central"/>
</dbReference>
<dbReference type="GO" id="GO:0006203">
    <property type="term" value="P:dGTP catabolic process"/>
    <property type="evidence" value="ECO:0000318"/>
    <property type="project" value="GO_Central"/>
</dbReference>
<dbReference type="CDD" id="cd00077">
    <property type="entry name" value="HDc"/>
    <property type="match status" value="1"/>
</dbReference>
<dbReference type="FunFam" id="1.10.3210.10:FF:000026">
    <property type="entry name" value="Metal-dependent phosphohydrolase"/>
    <property type="match status" value="1"/>
</dbReference>
<dbReference type="Gene3D" id="1.10.3210.10">
    <property type="entry name" value="Hypothetical protein af1432"/>
    <property type="match status" value="1"/>
</dbReference>
<dbReference type="InterPro" id="IPR050135">
    <property type="entry name" value="dGTPase-like"/>
</dbReference>
<dbReference type="InterPro" id="IPR003607">
    <property type="entry name" value="HD/PDEase_dom"/>
</dbReference>
<dbReference type="InterPro" id="IPR006674">
    <property type="entry name" value="HD_domain"/>
</dbReference>
<dbReference type="PANTHER" id="PTHR11373">
    <property type="entry name" value="DEOXYNUCLEOSIDE TRIPHOSPHATE TRIPHOSPHOHYDROLASE"/>
    <property type="match status" value="1"/>
</dbReference>
<dbReference type="PANTHER" id="PTHR11373:SF41">
    <property type="entry name" value="METAL-DEPENDENT PHOSPHOHYDROLASE"/>
    <property type="match status" value="1"/>
</dbReference>
<dbReference type="Pfam" id="PF01966">
    <property type="entry name" value="HD"/>
    <property type="match status" value="1"/>
</dbReference>
<dbReference type="SMART" id="SM00471">
    <property type="entry name" value="HDc"/>
    <property type="match status" value="1"/>
</dbReference>
<dbReference type="SUPFAM" id="SSF109604">
    <property type="entry name" value="HD-domain/PDEase-like"/>
    <property type="match status" value="1"/>
</dbReference>
<dbReference type="PROSITE" id="PS51831">
    <property type="entry name" value="HD"/>
    <property type="match status" value="1"/>
</dbReference>
<keyword id="KW-1185">Reference proteome</keyword>
<accession>O05502</accession>
<accession>Q797E5</accession>
<gene>
    <name type="primary">ydhJ</name>
    <name type="ordered locus">BSU05780</name>
</gene>
<reference key="1">
    <citation type="journal article" date="1997" name="Microbiology">
        <title>Nucleotide sequence and analysis of the phoB-rrnE-groESL region of the Bacillus subtilis chromosome.</title>
        <authorList>
            <person name="Sadaie Y."/>
            <person name="Yata K."/>
            <person name="Fujita M."/>
            <person name="Sagai H."/>
            <person name="Itaya M."/>
            <person name="Kasahara Y."/>
            <person name="Ogasawara N."/>
        </authorList>
    </citation>
    <scope>NUCLEOTIDE SEQUENCE [GENOMIC DNA]</scope>
    <source>
        <strain>168 / JH642</strain>
    </source>
</reference>
<reference key="2">
    <citation type="journal article" date="1997" name="Nature">
        <title>The complete genome sequence of the Gram-positive bacterium Bacillus subtilis.</title>
        <authorList>
            <person name="Kunst F."/>
            <person name="Ogasawara N."/>
            <person name="Moszer I."/>
            <person name="Albertini A.M."/>
            <person name="Alloni G."/>
            <person name="Azevedo V."/>
            <person name="Bertero M.G."/>
            <person name="Bessieres P."/>
            <person name="Bolotin A."/>
            <person name="Borchert S."/>
            <person name="Borriss R."/>
            <person name="Boursier L."/>
            <person name="Brans A."/>
            <person name="Braun M."/>
            <person name="Brignell S.C."/>
            <person name="Bron S."/>
            <person name="Brouillet S."/>
            <person name="Bruschi C.V."/>
            <person name="Caldwell B."/>
            <person name="Capuano V."/>
            <person name="Carter N.M."/>
            <person name="Choi S.-K."/>
            <person name="Codani J.-J."/>
            <person name="Connerton I.F."/>
            <person name="Cummings N.J."/>
            <person name="Daniel R.A."/>
            <person name="Denizot F."/>
            <person name="Devine K.M."/>
            <person name="Duesterhoeft A."/>
            <person name="Ehrlich S.D."/>
            <person name="Emmerson P.T."/>
            <person name="Entian K.-D."/>
            <person name="Errington J."/>
            <person name="Fabret C."/>
            <person name="Ferrari E."/>
            <person name="Foulger D."/>
            <person name="Fritz C."/>
            <person name="Fujita M."/>
            <person name="Fujita Y."/>
            <person name="Fuma S."/>
            <person name="Galizzi A."/>
            <person name="Galleron N."/>
            <person name="Ghim S.-Y."/>
            <person name="Glaser P."/>
            <person name="Goffeau A."/>
            <person name="Golightly E.J."/>
            <person name="Grandi G."/>
            <person name="Guiseppi G."/>
            <person name="Guy B.J."/>
            <person name="Haga K."/>
            <person name="Haiech J."/>
            <person name="Harwood C.R."/>
            <person name="Henaut A."/>
            <person name="Hilbert H."/>
            <person name="Holsappel S."/>
            <person name="Hosono S."/>
            <person name="Hullo M.-F."/>
            <person name="Itaya M."/>
            <person name="Jones L.-M."/>
            <person name="Joris B."/>
            <person name="Karamata D."/>
            <person name="Kasahara Y."/>
            <person name="Klaerr-Blanchard M."/>
            <person name="Klein C."/>
            <person name="Kobayashi Y."/>
            <person name="Koetter P."/>
            <person name="Koningstein G."/>
            <person name="Krogh S."/>
            <person name="Kumano M."/>
            <person name="Kurita K."/>
            <person name="Lapidus A."/>
            <person name="Lardinois S."/>
            <person name="Lauber J."/>
            <person name="Lazarevic V."/>
            <person name="Lee S.-M."/>
            <person name="Levine A."/>
            <person name="Liu H."/>
            <person name="Masuda S."/>
            <person name="Mauel C."/>
            <person name="Medigue C."/>
            <person name="Medina N."/>
            <person name="Mellado R.P."/>
            <person name="Mizuno M."/>
            <person name="Moestl D."/>
            <person name="Nakai S."/>
            <person name="Noback M."/>
            <person name="Noone D."/>
            <person name="O'Reilly M."/>
            <person name="Ogawa K."/>
            <person name="Ogiwara A."/>
            <person name="Oudega B."/>
            <person name="Park S.-H."/>
            <person name="Parro V."/>
            <person name="Pohl T.M."/>
            <person name="Portetelle D."/>
            <person name="Porwollik S."/>
            <person name="Prescott A.M."/>
            <person name="Presecan E."/>
            <person name="Pujic P."/>
            <person name="Purnelle B."/>
            <person name="Rapoport G."/>
            <person name="Rey M."/>
            <person name="Reynolds S."/>
            <person name="Rieger M."/>
            <person name="Rivolta C."/>
            <person name="Rocha E."/>
            <person name="Roche B."/>
            <person name="Rose M."/>
            <person name="Sadaie Y."/>
            <person name="Sato T."/>
            <person name="Scanlan E."/>
            <person name="Schleich S."/>
            <person name="Schroeter R."/>
            <person name="Scoffone F."/>
            <person name="Sekiguchi J."/>
            <person name="Sekowska A."/>
            <person name="Seror S.J."/>
            <person name="Serror P."/>
            <person name="Shin B.-S."/>
            <person name="Soldo B."/>
            <person name="Sorokin A."/>
            <person name="Tacconi E."/>
            <person name="Takagi T."/>
            <person name="Takahashi H."/>
            <person name="Takemaru K."/>
            <person name="Takeuchi M."/>
            <person name="Tamakoshi A."/>
            <person name="Tanaka T."/>
            <person name="Terpstra P."/>
            <person name="Tognoni A."/>
            <person name="Tosato V."/>
            <person name="Uchiyama S."/>
            <person name="Vandenbol M."/>
            <person name="Vannier F."/>
            <person name="Vassarotti A."/>
            <person name="Viari A."/>
            <person name="Wambutt R."/>
            <person name="Wedler E."/>
            <person name="Wedler H."/>
            <person name="Weitzenegger T."/>
            <person name="Winters P."/>
            <person name="Wipat A."/>
            <person name="Yamamoto H."/>
            <person name="Yamane K."/>
            <person name="Yasumoto K."/>
            <person name="Yata K."/>
            <person name="Yoshida K."/>
            <person name="Yoshikawa H.-F."/>
            <person name="Zumstein E."/>
            <person name="Yoshikawa H."/>
            <person name="Danchin A."/>
        </authorList>
    </citation>
    <scope>NUCLEOTIDE SEQUENCE [LARGE SCALE GENOMIC DNA]</scope>
    <source>
        <strain>168</strain>
    </source>
</reference>
<evidence type="ECO:0000255" key="1">
    <source>
        <dbReference type="PROSITE-ProRule" id="PRU01175"/>
    </source>
</evidence>
<protein>
    <recommendedName>
        <fullName>Uncharacterized protein YdhJ</fullName>
    </recommendedName>
</protein>